<organism>
    <name type="scientific">Schizosaccharomyces pombe (strain 972 / ATCC 24843)</name>
    <name type="common">Fission yeast</name>
    <dbReference type="NCBI Taxonomy" id="284812"/>
    <lineage>
        <taxon>Eukaryota</taxon>
        <taxon>Fungi</taxon>
        <taxon>Dikarya</taxon>
        <taxon>Ascomycota</taxon>
        <taxon>Taphrinomycotina</taxon>
        <taxon>Schizosaccharomycetes</taxon>
        <taxon>Schizosaccharomycetales</taxon>
        <taxon>Schizosaccharomycetaceae</taxon>
        <taxon>Schizosaccharomyces</taxon>
    </lineage>
</organism>
<comment type="subcellular location">
    <subcellularLocation>
        <location evidence="2">Membrane</location>
        <topology evidence="2">Multi-pass membrane protein</topology>
    </subcellularLocation>
</comment>
<feature type="chain" id="PRO_0000389150" description="Uncharacterized membrane protein C688.16">
    <location>
        <begin position="1"/>
        <end position="109"/>
    </location>
</feature>
<feature type="transmembrane region" description="Helical" evidence="1">
    <location>
        <begin position="16"/>
        <end position="36"/>
    </location>
</feature>
<feature type="transmembrane region" description="Helical" evidence="1">
    <location>
        <begin position="54"/>
        <end position="74"/>
    </location>
</feature>
<feature type="transmembrane region" description="Helical" evidence="1">
    <location>
        <begin position="80"/>
        <end position="100"/>
    </location>
</feature>
<gene>
    <name type="ORF">SPAC688.16</name>
</gene>
<accession>C6Y4A4</accession>
<reference key="1">
    <citation type="journal article" date="2002" name="Nature">
        <title>The genome sequence of Schizosaccharomyces pombe.</title>
        <authorList>
            <person name="Wood V."/>
            <person name="Gwilliam R."/>
            <person name="Rajandream M.A."/>
            <person name="Lyne M.H."/>
            <person name="Lyne R."/>
            <person name="Stewart A."/>
            <person name="Sgouros J.G."/>
            <person name="Peat N."/>
            <person name="Hayles J."/>
            <person name="Baker S.G."/>
            <person name="Basham D."/>
            <person name="Bowman S."/>
            <person name="Brooks K."/>
            <person name="Brown D."/>
            <person name="Brown S."/>
            <person name="Chillingworth T."/>
            <person name="Churcher C.M."/>
            <person name="Collins M."/>
            <person name="Connor R."/>
            <person name="Cronin A."/>
            <person name="Davis P."/>
            <person name="Feltwell T."/>
            <person name="Fraser A."/>
            <person name="Gentles S."/>
            <person name="Goble A."/>
            <person name="Hamlin N."/>
            <person name="Harris D.E."/>
            <person name="Hidalgo J."/>
            <person name="Hodgson G."/>
            <person name="Holroyd S."/>
            <person name="Hornsby T."/>
            <person name="Howarth S."/>
            <person name="Huckle E.J."/>
            <person name="Hunt S."/>
            <person name="Jagels K."/>
            <person name="James K.D."/>
            <person name="Jones L."/>
            <person name="Jones M."/>
            <person name="Leather S."/>
            <person name="McDonald S."/>
            <person name="McLean J."/>
            <person name="Mooney P."/>
            <person name="Moule S."/>
            <person name="Mungall K.L."/>
            <person name="Murphy L.D."/>
            <person name="Niblett D."/>
            <person name="Odell C."/>
            <person name="Oliver K."/>
            <person name="O'Neil S."/>
            <person name="Pearson D."/>
            <person name="Quail M.A."/>
            <person name="Rabbinowitsch E."/>
            <person name="Rutherford K.M."/>
            <person name="Rutter S."/>
            <person name="Saunders D."/>
            <person name="Seeger K."/>
            <person name="Sharp S."/>
            <person name="Skelton J."/>
            <person name="Simmonds M.N."/>
            <person name="Squares R."/>
            <person name="Squares S."/>
            <person name="Stevens K."/>
            <person name="Taylor K."/>
            <person name="Taylor R.G."/>
            <person name="Tivey A."/>
            <person name="Walsh S.V."/>
            <person name="Warren T."/>
            <person name="Whitehead S."/>
            <person name="Woodward J.R."/>
            <person name="Volckaert G."/>
            <person name="Aert R."/>
            <person name="Robben J."/>
            <person name="Grymonprez B."/>
            <person name="Weltjens I."/>
            <person name="Vanstreels E."/>
            <person name="Rieger M."/>
            <person name="Schaefer M."/>
            <person name="Mueller-Auer S."/>
            <person name="Gabel C."/>
            <person name="Fuchs M."/>
            <person name="Duesterhoeft A."/>
            <person name="Fritzc C."/>
            <person name="Holzer E."/>
            <person name="Moestl D."/>
            <person name="Hilbert H."/>
            <person name="Borzym K."/>
            <person name="Langer I."/>
            <person name="Beck A."/>
            <person name="Lehrach H."/>
            <person name="Reinhardt R."/>
            <person name="Pohl T.M."/>
            <person name="Eger P."/>
            <person name="Zimmermann W."/>
            <person name="Wedler H."/>
            <person name="Wambutt R."/>
            <person name="Purnelle B."/>
            <person name="Goffeau A."/>
            <person name="Cadieu E."/>
            <person name="Dreano S."/>
            <person name="Gloux S."/>
            <person name="Lelaure V."/>
            <person name="Mottier S."/>
            <person name="Galibert F."/>
            <person name="Aves S.J."/>
            <person name="Xiang Z."/>
            <person name="Hunt C."/>
            <person name="Moore K."/>
            <person name="Hurst S.M."/>
            <person name="Lucas M."/>
            <person name="Rochet M."/>
            <person name="Gaillardin C."/>
            <person name="Tallada V.A."/>
            <person name="Garzon A."/>
            <person name="Thode G."/>
            <person name="Daga R.R."/>
            <person name="Cruzado L."/>
            <person name="Jimenez J."/>
            <person name="Sanchez M."/>
            <person name="del Rey F."/>
            <person name="Benito J."/>
            <person name="Dominguez A."/>
            <person name="Revuelta J.L."/>
            <person name="Moreno S."/>
            <person name="Armstrong J."/>
            <person name="Forsburg S.L."/>
            <person name="Cerutti L."/>
            <person name="Lowe T."/>
            <person name="McCombie W.R."/>
            <person name="Paulsen I."/>
            <person name="Potashkin J."/>
            <person name="Shpakovski G.V."/>
            <person name="Ussery D."/>
            <person name="Barrell B.G."/>
            <person name="Nurse P."/>
        </authorList>
    </citation>
    <scope>NUCLEOTIDE SEQUENCE [LARGE SCALE GENOMIC DNA]</scope>
    <source>
        <strain>972 / ATCC 24843</strain>
    </source>
</reference>
<reference key="2">
    <citation type="journal article" date="2008" name="Nature">
        <title>Dynamic repertoire of a eukaryotic transcriptome surveyed at single-nucleotide resolution.</title>
        <authorList>
            <person name="Wilhelm B.T."/>
            <person name="Marguerat S."/>
            <person name="Watt S."/>
            <person name="Schubert F."/>
            <person name="Wood V."/>
            <person name="Goodhead I."/>
            <person name="Penkett C.J."/>
            <person name="Rogers J."/>
            <person name="Baehler J."/>
        </authorList>
    </citation>
    <scope>IDENTIFICATION</scope>
</reference>
<keyword id="KW-0472">Membrane</keyword>
<keyword id="KW-1185">Reference proteome</keyword>
<keyword id="KW-0812">Transmembrane</keyword>
<keyword id="KW-1133">Transmembrane helix</keyword>
<evidence type="ECO:0000255" key="1"/>
<evidence type="ECO:0000305" key="2"/>
<name>YKQP_SCHPO</name>
<proteinExistence type="evidence at transcript level"/>
<protein>
    <recommendedName>
        <fullName>Uncharacterized membrane protein C688.16</fullName>
    </recommendedName>
</protein>
<dbReference type="EMBL" id="CU329670">
    <property type="protein sequence ID" value="CBA11501.1"/>
    <property type="molecule type" value="Genomic_DNA"/>
</dbReference>
<dbReference type="RefSeq" id="XP_002742510.1">
    <property type="nucleotide sequence ID" value="XM_002742464.2"/>
</dbReference>
<dbReference type="BioGRID" id="1028314">
    <property type="interactions" value="3"/>
</dbReference>
<dbReference type="PaxDb" id="4896-SPAC688.16.1"/>
<dbReference type="EnsemblFungi" id="SPAC688.16.1">
    <property type="protein sequence ID" value="SPAC688.16.1:pep"/>
    <property type="gene ID" value="SPAC688.16"/>
</dbReference>
<dbReference type="PomBase" id="SPAC688.16"/>
<dbReference type="VEuPathDB" id="FungiDB:SPAC688.16"/>
<dbReference type="HOGENOM" id="CLU_2134991_0_0_1"/>
<dbReference type="InParanoid" id="C6Y4A4"/>
<dbReference type="OMA" id="EAYIALM"/>
<dbReference type="PRO" id="PR:C6Y4A4"/>
<dbReference type="Proteomes" id="UP000002485">
    <property type="component" value="Chromosome I"/>
</dbReference>
<dbReference type="GO" id="GO:0016020">
    <property type="term" value="C:membrane"/>
    <property type="evidence" value="ECO:0007669"/>
    <property type="project" value="UniProtKB-SubCell"/>
</dbReference>
<dbReference type="InterPro" id="IPR028110">
    <property type="entry name" value="TMEM254"/>
</dbReference>
<dbReference type="PANTHER" id="PTHR34104">
    <property type="entry name" value="TRANSMEMBRANE PROTEIN 254"/>
    <property type="match status" value="1"/>
</dbReference>
<dbReference type="PANTHER" id="PTHR34104:SF3">
    <property type="entry name" value="TRANSMEMBRANE PROTEIN 254"/>
    <property type="match status" value="1"/>
</dbReference>
<dbReference type="Pfam" id="PF14934">
    <property type="entry name" value="TMEM254"/>
    <property type="match status" value="1"/>
</dbReference>
<sequence>MSCLNLHVPKNPVGKYIPLVVLLQMYIIYVEPYYGLHYFESVRQFLGPKILYGTVYFLVICHSIESAIAFLLCLKKGLPFCSSMKWIVSTFIFGGPTLAMLNKQKKHIA</sequence>